<sequence length="353" mass="38937">MTAILERRESESLWGRFCNWITSTENRLYIGWFGVLMIPTLLTATSVFIIAFIAAPPVDIDGIREPVSGSLLYGNNIISGAIIPTSAAIGLHFYPIWEAASVDEWLYNGGPYELIVLHFLLGVACYMGREWELSFRLGMRPWIAVAYSAPVAAATAVFLIYPIGQGSFSDGMPLGISGTFNFMIVFQAEHNILMHPFHMLGVAGVFGGSLFSAMHGSLVTSSLIRETTENESANEGYRFGQEEETYNIVAAHGYFGRLIFQYASFNNSRSLHFFLAAWPVVGIWFTALGISTMAFNLNGFNFNQSVVDSQGRVINTWADIINRANLGMEVMHERNAHNFPLDLAAVEAPSTNG</sequence>
<protein>
    <recommendedName>
        <fullName evidence="2">Photosystem II protein D1</fullName>
        <shortName evidence="2">PSII D1 protein</shortName>
        <ecNumber evidence="2">1.10.3.9</ecNumber>
    </recommendedName>
    <alternativeName>
        <fullName evidence="2">Photosystem II Q(B) protein</fullName>
    </alternativeName>
</protein>
<keyword id="KW-0007">Acetylation</keyword>
<keyword id="KW-0106">Calcium</keyword>
<keyword id="KW-0148">Chlorophyll</keyword>
<keyword id="KW-0150">Chloroplast</keyword>
<keyword id="KW-0157">Chromophore</keyword>
<keyword id="KW-0249">Electron transport</keyword>
<keyword id="KW-0359">Herbicide resistance</keyword>
<keyword id="KW-0408">Iron</keyword>
<keyword id="KW-0460">Magnesium</keyword>
<keyword id="KW-0464">Manganese</keyword>
<keyword id="KW-0472">Membrane</keyword>
<keyword id="KW-0479">Metal-binding</keyword>
<keyword id="KW-0560">Oxidoreductase</keyword>
<keyword id="KW-0597">Phosphoprotein</keyword>
<keyword id="KW-0602">Photosynthesis</keyword>
<keyword id="KW-0604">Photosystem II</keyword>
<keyword id="KW-0934">Plastid</keyword>
<keyword id="KW-0793">Thylakoid</keyword>
<keyword id="KW-0812">Transmembrane</keyword>
<keyword id="KW-1133">Transmembrane helix</keyword>
<keyword id="KW-0813">Transport</keyword>
<proteinExistence type="inferred from homology"/>
<comment type="function">
    <text evidence="2">Photosystem II (PSII) is a light-driven water:plastoquinone oxidoreductase that uses light energy to abstract electrons from H(2)O, generating O(2) and a proton gradient subsequently used for ATP formation. It consists of a core antenna complex that captures photons, and an electron transfer chain that converts photonic excitation into a charge separation. The D1/D2 (PsbA/PsbD) reaction center heterodimer binds P680, the primary electron donor of PSII as well as several subsequent electron acceptors.</text>
</comment>
<comment type="catalytic activity">
    <reaction evidence="2">
        <text>2 a plastoquinone + 4 hnu + 2 H2O = 2 a plastoquinol + O2</text>
        <dbReference type="Rhea" id="RHEA:36359"/>
        <dbReference type="Rhea" id="RHEA-COMP:9561"/>
        <dbReference type="Rhea" id="RHEA-COMP:9562"/>
        <dbReference type="ChEBI" id="CHEBI:15377"/>
        <dbReference type="ChEBI" id="CHEBI:15379"/>
        <dbReference type="ChEBI" id="CHEBI:17757"/>
        <dbReference type="ChEBI" id="CHEBI:30212"/>
        <dbReference type="ChEBI" id="CHEBI:62192"/>
        <dbReference type="EC" id="1.10.3.9"/>
    </reaction>
</comment>
<comment type="cofactor">
    <text evidence="2">The D1/D2 heterodimer binds P680, chlorophylls that are the primary electron donor of PSII, and subsequent electron acceptors. It shares a non-heme iron and each subunit binds pheophytin, quinone, additional chlorophylls, carotenoids and lipids. D1 provides most of the ligands for the Mn4-Ca-O5 cluster of the oxygen-evolving complex (OEC). There is also a Cl(-1) ion associated with D1 and D2, which is required for oxygen evolution. The PSII complex binds additional chlorophylls, carotenoids and specific lipids.</text>
</comment>
<comment type="subunit">
    <text evidence="2">PSII is composed of 1 copy each of membrane proteins PsbA, PsbB, PsbC, PsbD, PsbE, PsbF, PsbH, PsbI, PsbJ, PsbK, PsbL, PsbM, PsbT, PsbX, PsbY, PsbZ, Psb30/Ycf12, at least 3 peripheral proteins of the oxygen-evolving complex and a large number of cofactors. It forms dimeric complexes.</text>
</comment>
<comment type="subcellular location">
    <subcellularLocation>
        <location evidence="2">Plastid</location>
        <location evidence="2">Chloroplast thylakoid membrane</location>
        <topology evidence="2">Multi-pass membrane protein</topology>
    </subcellularLocation>
</comment>
<comment type="PTM">
    <text evidence="2">Tyr-161 forms a radical intermediate that is referred to as redox-active TyrZ, YZ or Y-Z.</text>
</comment>
<comment type="PTM">
    <text evidence="2">C-terminally processed by CTPA; processing is essential to allow assembly of the oxygen-evolving complex and thus photosynthetic growth.</text>
</comment>
<comment type="miscellaneous">
    <text evidence="2">2 of the reaction center chlorophylls (ChlD1 and ChlD2) are entirely coordinated by water.</text>
</comment>
<comment type="miscellaneous">
    <text evidence="2">Herbicides such as atrazine, BNT, diuron or ioxynil bind in the Q(B) binding site and block subsequent electron transfer.</text>
</comment>
<comment type="similarity">
    <text evidence="2">Belongs to the reaction center PufL/M/PsbA/D family.</text>
</comment>
<dbReference type="EC" id="1.10.3.9" evidence="2"/>
<dbReference type="EMBL" id="AP009371">
    <property type="protein sequence ID" value="BAF50177.1"/>
    <property type="molecule type" value="Genomic_DNA"/>
</dbReference>
<dbReference type="RefSeq" id="YP_001123353.1">
    <property type="nucleotide sequence ID" value="NC_009270.1"/>
</dbReference>
<dbReference type="SMR" id="A4QKH2"/>
<dbReference type="GeneID" id="4961647"/>
<dbReference type="GO" id="GO:0009535">
    <property type="term" value="C:chloroplast thylakoid membrane"/>
    <property type="evidence" value="ECO:0007669"/>
    <property type="project" value="UniProtKB-SubCell"/>
</dbReference>
<dbReference type="GO" id="GO:0009523">
    <property type="term" value="C:photosystem II"/>
    <property type="evidence" value="ECO:0007669"/>
    <property type="project" value="UniProtKB-KW"/>
</dbReference>
<dbReference type="GO" id="GO:0016168">
    <property type="term" value="F:chlorophyll binding"/>
    <property type="evidence" value="ECO:0007669"/>
    <property type="project" value="UniProtKB-UniRule"/>
</dbReference>
<dbReference type="GO" id="GO:0045156">
    <property type="term" value="F:electron transporter, transferring electrons within the cyclic electron transport pathway of photosynthesis activity"/>
    <property type="evidence" value="ECO:0007669"/>
    <property type="project" value="InterPro"/>
</dbReference>
<dbReference type="GO" id="GO:0005506">
    <property type="term" value="F:iron ion binding"/>
    <property type="evidence" value="ECO:0007669"/>
    <property type="project" value="UniProtKB-UniRule"/>
</dbReference>
<dbReference type="GO" id="GO:0016682">
    <property type="term" value="F:oxidoreductase activity, acting on diphenols and related substances as donors, oxygen as acceptor"/>
    <property type="evidence" value="ECO:0007669"/>
    <property type="project" value="UniProtKB-UniRule"/>
</dbReference>
<dbReference type="GO" id="GO:0010242">
    <property type="term" value="F:oxygen evolving activity"/>
    <property type="evidence" value="ECO:0007669"/>
    <property type="project" value="UniProtKB-EC"/>
</dbReference>
<dbReference type="GO" id="GO:0009772">
    <property type="term" value="P:photosynthetic electron transport in photosystem II"/>
    <property type="evidence" value="ECO:0007669"/>
    <property type="project" value="InterPro"/>
</dbReference>
<dbReference type="GO" id="GO:0009635">
    <property type="term" value="P:response to herbicide"/>
    <property type="evidence" value="ECO:0007669"/>
    <property type="project" value="UniProtKB-KW"/>
</dbReference>
<dbReference type="CDD" id="cd09289">
    <property type="entry name" value="Photosystem-II_D1"/>
    <property type="match status" value="1"/>
</dbReference>
<dbReference type="FunFam" id="1.20.85.10:FF:000002">
    <property type="entry name" value="Photosystem II protein D1"/>
    <property type="match status" value="1"/>
</dbReference>
<dbReference type="Gene3D" id="1.20.85.10">
    <property type="entry name" value="Photosystem II protein D1-like"/>
    <property type="match status" value="1"/>
</dbReference>
<dbReference type="HAMAP" id="MF_01379">
    <property type="entry name" value="PSII_PsbA_D1"/>
    <property type="match status" value="1"/>
</dbReference>
<dbReference type="InterPro" id="IPR055266">
    <property type="entry name" value="D1/D2"/>
</dbReference>
<dbReference type="InterPro" id="IPR036854">
    <property type="entry name" value="Photo_II_D1/D2_sf"/>
</dbReference>
<dbReference type="InterPro" id="IPR000484">
    <property type="entry name" value="Photo_RC_L/M"/>
</dbReference>
<dbReference type="InterPro" id="IPR055265">
    <property type="entry name" value="Photo_RC_L/M_CS"/>
</dbReference>
<dbReference type="InterPro" id="IPR005867">
    <property type="entry name" value="PSII_D1"/>
</dbReference>
<dbReference type="NCBIfam" id="TIGR01151">
    <property type="entry name" value="psbA"/>
    <property type="match status" value="1"/>
</dbReference>
<dbReference type="PANTHER" id="PTHR33149:SF12">
    <property type="entry name" value="PHOTOSYSTEM II D2 PROTEIN"/>
    <property type="match status" value="1"/>
</dbReference>
<dbReference type="PANTHER" id="PTHR33149">
    <property type="entry name" value="PHOTOSYSTEM II PROTEIN D1"/>
    <property type="match status" value="1"/>
</dbReference>
<dbReference type="Pfam" id="PF00124">
    <property type="entry name" value="Photo_RC"/>
    <property type="match status" value="1"/>
</dbReference>
<dbReference type="PRINTS" id="PR00256">
    <property type="entry name" value="REACTNCENTRE"/>
</dbReference>
<dbReference type="SUPFAM" id="SSF81483">
    <property type="entry name" value="Bacterial photosystem II reaction centre, L and M subunits"/>
    <property type="match status" value="1"/>
</dbReference>
<dbReference type="PROSITE" id="PS00244">
    <property type="entry name" value="REACTION_CENTER"/>
    <property type="match status" value="1"/>
</dbReference>
<geneLocation type="chloroplast"/>
<gene>
    <name evidence="2" type="primary">psbA</name>
</gene>
<reference key="1">
    <citation type="submission" date="2007-03" db="EMBL/GenBank/DDBJ databases">
        <title>Sequencing analysis of Capsella bursa-pastoris JO22 chloroplast DNA.</title>
        <authorList>
            <person name="Hosouchi T."/>
            <person name="Tsuruoka H."/>
            <person name="Kotani H."/>
        </authorList>
    </citation>
    <scope>NUCLEOTIDE SEQUENCE [LARGE SCALE GENOMIC DNA]</scope>
</reference>
<feature type="initiator methionine" description="Removed" evidence="1">
    <location>
        <position position="1"/>
    </location>
</feature>
<feature type="chain" id="PRO_0000339958" description="Photosystem II protein D1" evidence="2">
    <location>
        <begin position="2"/>
        <end position="344"/>
    </location>
</feature>
<feature type="propeptide" id="PRO_0000339959" evidence="2">
    <location>
        <begin position="345"/>
        <end position="353"/>
    </location>
</feature>
<feature type="transmembrane region" description="Helical" evidence="2">
    <location>
        <begin position="29"/>
        <end position="46"/>
    </location>
</feature>
<feature type="transmembrane region" description="Helical" evidence="2">
    <location>
        <begin position="118"/>
        <end position="133"/>
    </location>
</feature>
<feature type="transmembrane region" description="Helical" evidence="2">
    <location>
        <begin position="142"/>
        <end position="156"/>
    </location>
</feature>
<feature type="transmembrane region" description="Helical" evidence="2">
    <location>
        <begin position="197"/>
        <end position="218"/>
    </location>
</feature>
<feature type="transmembrane region" description="Helical" evidence="2">
    <location>
        <begin position="274"/>
        <end position="288"/>
    </location>
</feature>
<feature type="binding site" description="axial binding residue" evidence="2">
    <location>
        <position position="118"/>
    </location>
    <ligand>
        <name>chlorophyll a</name>
        <dbReference type="ChEBI" id="CHEBI:58416"/>
        <label>ChlzD1</label>
    </ligand>
    <ligandPart>
        <name>Mg</name>
        <dbReference type="ChEBI" id="CHEBI:25107"/>
    </ligandPart>
</feature>
<feature type="binding site" evidence="2">
    <location>
        <position position="126"/>
    </location>
    <ligand>
        <name>pheophytin a</name>
        <dbReference type="ChEBI" id="CHEBI:136840"/>
        <label>D1</label>
    </ligand>
</feature>
<feature type="binding site" evidence="2">
    <location>
        <position position="170"/>
    </location>
    <ligand>
        <name>[CaMn4O5] cluster</name>
        <dbReference type="ChEBI" id="CHEBI:189552"/>
    </ligand>
</feature>
<feature type="binding site" evidence="2">
    <location>
        <position position="189"/>
    </location>
    <ligand>
        <name>[CaMn4O5] cluster</name>
        <dbReference type="ChEBI" id="CHEBI:189552"/>
    </ligand>
</feature>
<feature type="binding site" description="axial binding residue" evidence="2">
    <location>
        <position position="198"/>
    </location>
    <ligand>
        <name>chlorophyll a</name>
        <dbReference type="ChEBI" id="CHEBI:58416"/>
        <label>PD1</label>
    </ligand>
    <ligandPart>
        <name>Mg</name>
        <dbReference type="ChEBI" id="CHEBI:25107"/>
    </ligandPart>
</feature>
<feature type="binding site" evidence="2">
    <location>
        <position position="215"/>
    </location>
    <ligand>
        <name>a quinone</name>
        <dbReference type="ChEBI" id="CHEBI:132124"/>
        <label>B</label>
    </ligand>
</feature>
<feature type="binding site" evidence="2">
    <location>
        <position position="215"/>
    </location>
    <ligand>
        <name>Fe cation</name>
        <dbReference type="ChEBI" id="CHEBI:24875"/>
        <note>ligand shared with heterodimeric partner</note>
    </ligand>
</feature>
<feature type="binding site" evidence="2">
    <location>
        <begin position="264"/>
        <end position="265"/>
    </location>
    <ligand>
        <name>a quinone</name>
        <dbReference type="ChEBI" id="CHEBI:132124"/>
        <label>B</label>
    </ligand>
</feature>
<feature type="binding site" evidence="2">
    <location>
        <position position="272"/>
    </location>
    <ligand>
        <name>Fe cation</name>
        <dbReference type="ChEBI" id="CHEBI:24875"/>
        <note>ligand shared with heterodimeric partner</note>
    </ligand>
</feature>
<feature type="binding site" evidence="2">
    <location>
        <position position="332"/>
    </location>
    <ligand>
        <name>[CaMn4O5] cluster</name>
        <dbReference type="ChEBI" id="CHEBI:189552"/>
    </ligand>
</feature>
<feature type="binding site" evidence="2">
    <location>
        <position position="333"/>
    </location>
    <ligand>
        <name>[CaMn4O5] cluster</name>
        <dbReference type="ChEBI" id="CHEBI:189552"/>
    </ligand>
</feature>
<feature type="binding site" evidence="2">
    <location>
        <position position="342"/>
    </location>
    <ligand>
        <name>[CaMn4O5] cluster</name>
        <dbReference type="ChEBI" id="CHEBI:189552"/>
    </ligand>
</feature>
<feature type="binding site" evidence="2">
    <location>
        <position position="344"/>
    </location>
    <ligand>
        <name>[CaMn4O5] cluster</name>
        <dbReference type="ChEBI" id="CHEBI:189552"/>
    </ligand>
</feature>
<feature type="site" description="Tyrosine radical intermediate" evidence="2">
    <location>
        <position position="161"/>
    </location>
</feature>
<feature type="site" description="Stabilizes free radical intermediate" evidence="2">
    <location>
        <position position="190"/>
    </location>
</feature>
<feature type="site" description="Cleavage; by CTPA" evidence="2">
    <location>
        <begin position="344"/>
        <end position="345"/>
    </location>
</feature>
<feature type="modified residue" description="N-acetylthreonine" evidence="1 2">
    <location>
        <position position="2"/>
    </location>
</feature>
<feature type="modified residue" description="Phosphothreonine" evidence="1 2">
    <location>
        <position position="2"/>
    </location>
</feature>
<accession>A4QKH2</accession>
<organism>
    <name type="scientific">Capsella bursa-pastoris</name>
    <name type="common">Shepherd's purse</name>
    <name type="synonym">Thlaspi bursa-pastoris</name>
    <dbReference type="NCBI Taxonomy" id="3719"/>
    <lineage>
        <taxon>Eukaryota</taxon>
        <taxon>Viridiplantae</taxon>
        <taxon>Streptophyta</taxon>
        <taxon>Embryophyta</taxon>
        <taxon>Tracheophyta</taxon>
        <taxon>Spermatophyta</taxon>
        <taxon>Magnoliopsida</taxon>
        <taxon>eudicotyledons</taxon>
        <taxon>Gunneridae</taxon>
        <taxon>Pentapetalae</taxon>
        <taxon>rosids</taxon>
        <taxon>malvids</taxon>
        <taxon>Brassicales</taxon>
        <taxon>Brassicaceae</taxon>
        <taxon>Camelineae</taxon>
        <taxon>Capsella</taxon>
    </lineage>
</organism>
<name>PSBA_CAPBU</name>
<evidence type="ECO:0000250" key="1">
    <source>
        <dbReference type="UniProtKB" id="P83755"/>
    </source>
</evidence>
<evidence type="ECO:0000255" key="2">
    <source>
        <dbReference type="HAMAP-Rule" id="MF_01379"/>
    </source>
</evidence>